<keyword id="KW-0068">Autocatalytic cleavage</keyword>
<keyword id="KW-0227">DNA damage</keyword>
<keyword id="KW-0234">DNA repair</keyword>
<keyword id="KW-0235">DNA replication</keyword>
<keyword id="KW-0238">DNA-binding</keyword>
<keyword id="KW-0378">Hydrolase</keyword>
<keyword id="KW-1185">Reference proteome</keyword>
<keyword id="KW-0678">Repressor</keyword>
<keyword id="KW-0742">SOS response</keyword>
<keyword id="KW-0804">Transcription</keyword>
<keyword id="KW-0805">Transcription regulation</keyword>
<reference key="1">
    <citation type="journal article" date="2011" name="J. Bacteriol.">
        <title>Genome of Ochrobactrum anthropi ATCC 49188 T, a versatile opportunistic pathogen and symbiont of several eukaryotic hosts.</title>
        <authorList>
            <person name="Chain P.S."/>
            <person name="Lang D.M."/>
            <person name="Comerci D.J."/>
            <person name="Malfatti S.A."/>
            <person name="Vergez L.M."/>
            <person name="Shin M."/>
            <person name="Ugalde R.A."/>
            <person name="Garcia E."/>
            <person name="Tolmasky M.E."/>
        </authorList>
    </citation>
    <scope>NUCLEOTIDE SEQUENCE [LARGE SCALE GENOMIC DNA]</scope>
    <source>
        <strain>ATCC 49188 / DSM 6882 / CCUG 24695 / JCM 21032 / LMG 3331 / NBRC 15819 / NCTC 12168 / Alc 37</strain>
    </source>
</reference>
<gene>
    <name evidence="1" type="primary">lexA</name>
    <name type="ordered locus">Oant_2045</name>
</gene>
<protein>
    <recommendedName>
        <fullName evidence="1">LexA repressor</fullName>
        <ecNumber evidence="1">3.4.21.88</ecNumber>
    </recommendedName>
</protein>
<evidence type="ECO:0000255" key="1">
    <source>
        <dbReference type="HAMAP-Rule" id="MF_00015"/>
    </source>
</evidence>
<evidence type="ECO:0000256" key="2">
    <source>
        <dbReference type="SAM" id="MobiDB-lite"/>
    </source>
</evidence>
<name>LEXA_BRUA4</name>
<sequence length="239" mass="25920">MLTRKQHELLLFIHERLKETGIPPSFDEMKEALDLASKSGIHRLITALEERGFIRRLPNRARALEVLRLPDSIAPGLNAQKKFAPSVIEGSLGKTPPPPARPAPVATNDDTSGTVSVPVMGRIAAGVPISAIQNQTHSLSLPPEMIGAGEHYALEVRGDSMIDAGIFDGDTVIIKRGDSANPGEIVVALVDDEEATLKRFRRKGASIALEAANPAYETRIFGPDRVRVQGKLVGLIRRY</sequence>
<proteinExistence type="inferred from homology"/>
<comment type="function">
    <text evidence="1">Represses a number of genes involved in the response to DNA damage (SOS response), including recA and lexA. In the presence of single-stranded DNA, RecA interacts with LexA causing an autocatalytic cleavage which disrupts the DNA-binding part of LexA, leading to derepression of the SOS regulon and eventually DNA repair.</text>
</comment>
<comment type="catalytic activity">
    <reaction evidence="1">
        <text>Hydrolysis of Ala-|-Gly bond in repressor LexA.</text>
        <dbReference type="EC" id="3.4.21.88"/>
    </reaction>
</comment>
<comment type="subunit">
    <text evidence="1">Homodimer.</text>
</comment>
<comment type="similarity">
    <text evidence="1">Belongs to the peptidase S24 family.</text>
</comment>
<accession>A6X0K7</accession>
<organism>
    <name type="scientific">Brucella anthropi (strain ATCC 49188 / DSM 6882 / CCUG 24695 / JCM 21032 / LMG 3331 / NBRC 15819 / NCTC 12168 / Alc 37)</name>
    <name type="common">Ochrobactrum anthropi</name>
    <dbReference type="NCBI Taxonomy" id="439375"/>
    <lineage>
        <taxon>Bacteria</taxon>
        <taxon>Pseudomonadati</taxon>
        <taxon>Pseudomonadota</taxon>
        <taxon>Alphaproteobacteria</taxon>
        <taxon>Hyphomicrobiales</taxon>
        <taxon>Brucellaceae</taxon>
        <taxon>Brucella/Ochrobactrum group</taxon>
        <taxon>Brucella</taxon>
    </lineage>
</organism>
<dbReference type="EC" id="3.4.21.88" evidence="1"/>
<dbReference type="EMBL" id="CP000758">
    <property type="protein sequence ID" value="ABS14761.1"/>
    <property type="molecule type" value="Genomic_DNA"/>
</dbReference>
<dbReference type="RefSeq" id="WP_010659992.1">
    <property type="nucleotide sequence ID" value="NC_009667.1"/>
</dbReference>
<dbReference type="SMR" id="A6X0K7"/>
<dbReference type="STRING" id="439375.Oant_2045"/>
<dbReference type="MEROPS" id="S24.001"/>
<dbReference type="GeneID" id="61317498"/>
<dbReference type="KEGG" id="oan:Oant_2045"/>
<dbReference type="eggNOG" id="COG1974">
    <property type="taxonomic scope" value="Bacteria"/>
</dbReference>
<dbReference type="HOGENOM" id="CLU_066192_45_2_5"/>
<dbReference type="PhylomeDB" id="A6X0K7"/>
<dbReference type="Proteomes" id="UP000002301">
    <property type="component" value="Chromosome 1"/>
</dbReference>
<dbReference type="GO" id="GO:0003677">
    <property type="term" value="F:DNA binding"/>
    <property type="evidence" value="ECO:0007669"/>
    <property type="project" value="UniProtKB-UniRule"/>
</dbReference>
<dbReference type="GO" id="GO:0004252">
    <property type="term" value="F:serine-type endopeptidase activity"/>
    <property type="evidence" value="ECO:0007669"/>
    <property type="project" value="UniProtKB-UniRule"/>
</dbReference>
<dbReference type="GO" id="GO:0006281">
    <property type="term" value="P:DNA repair"/>
    <property type="evidence" value="ECO:0007669"/>
    <property type="project" value="UniProtKB-UniRule"/>
</dbReference>
<dbReference type="GO" id="GO:0006260">
    <property type="term" value="P:DNA replication"/>
    <property type="evidence" value="ECO:0007669"/>
    <property type="project" value="UniProtKB-UniRule"/>
</dbReference>
<dbReference type="GO" id="GO:0045892">
    <property type="term" value="P:negative regulation of DNA-templated transcription"/>
    <property type="evidence" value="ECO:0007669"/>
    <property type="project" value="UniProtKB-UniRule"/>
</dbReference>
<dbReference type="GO" id="GO:0006508">
    <property type="term" value="P:proteolysis"/>
    <property type="evidence" value="ECO:0007669"/>
    <property type="project" value="InterPro"/>
</dbReference>
<dbReference type="GO" id="GO:0009432">
    <property type="term" value="P:SOS response"/>
    <property type="evidence" value="ECO:0007669"/>
    <property type="project" value="UniProtKB-UniRule"/>
</dbReference>
<dbReference type="CDD" id="cd06529">
    <property type="entry name" value="S24_LexA-like"/>
    <property type="match status" value="1"/>
</dbReference>
<dbReference type="FunFam" id="1.10.10.10:FF:000102">
    <property type="entry name" value="LexA repressor"/>
    <property type="match status" value="1"/>
</dbReference>
<dbReference type="FunFam" id="2.10.109.10:FF:000001">
    <property type="entry name" value="LexA repressor"/>
    <property type="match status" value="1"/>
</dbReference>
<dbReference type="Gene3D" id="2.10.109.10">
    <property type="entry name" value="Umud Fragment, subunit A"/>
    <property type="match status" value="1"/>
</dbReference>
<dbReference type="Gene3D" id="1.10.10.10">
    <property type="entry name" value="Winged helix-like DNA-binding domain superfamily/Winged helix DNA-binding domain"/>
    <property type="match status" value="1"/>
</dbReference>
<dbReference type="HAMAP" id="MF_00015">
    <property type="entry name" value="LexA"/>
    <property type="match status" value="1"/>
</dbReference>
<dbReference type="InterPro" id="IPR006200">
    <property type="entry name" value="LexA"/>
</dbReference>
<dbReference type="InterPro" id="IPR039418">
    <property type="entry name" value="LexA-like"/>
</dbReference>
<dbReference type="InterPro" id="IPR036286">
    <property type="entry name" value="LexA/Signal_pep-like_sf"/>
</dbReference>
<dbReference type="InterPro" id="IPR006199">
    <property type="entry name" value="LexA_DNA-bd_dom"/>
</dbReference>
<dbReference type="InterPro" id="IPR050077">
    <property type="entry name" value="LexA_repressor"/>
</dbReference>
<dbReference type="InterPro" id="IPR006197">
    <property type="entry name" value="Peptidase_S24_LexA"/>
</dbReference>
<dbReference type="InterPro" id="IPR015927">
    <property type="entry name" value="Peptidase_S24_S26A/B/C"/>
</dbReference>
<dbReference type="InterPro" id="IPR036388">
    <property type="entry name" value="WH-like_DNA-bd_sf"/>
</dbReference>
<dbReference type="InterPro" id="IPR036390">
    <property type="entry name" value="WH_DNA-bd_sf"/>
</dbReference>
<dbReference type="NCBIfam" id="TIGR00498">
    <property type="entry name" value="lexA"/>
    <property type="match status" value="1"/>
</dbReference>
<dbReference type="PANTHER" id="PTHR33516">
    <property type="entry name" value="LEXA REPRESSOR"/>
    <property type="match status" value="1"/>
</dbReference>
<dbReference type="PANTHER" id="PTHR33516:SF2">
    <property type="entry name" value="LEXA REPRESSOR-RELATED"/>
    <property type="match status" value="1"/>
</dbReference>
<dbReference type="Pfam" id="PF01726">
    <property type="entry name" value="LexA_DNA_bind"/>
    <property type="match status" value="1"/>
</dbReference>
<dbReference type="Pfam" id="PF00717">
    <property type="entry name" value="Peptidase_S24"/>
    <property type="match status" value="1"/>
</dbReference>
<dbReference type="PRINTS" id="PR00726">
    <property type="entry name" value="LEXASERPTASE"/>
</dbReference>
<dbReference type="SUPFAM" id="SSF51306">
    <property type="entry name" value="LexA/Signal peptidase"/>
    <property type="match status" value="1"/>
</dbReference>
<dbReference type="SUPFAM" id="SSF46785">
    <property type="entry name" value="Winged helix' DNA-binding domain"/>
    <property type="match status" value="1"/>
</dbReference>
<feature type="chain" id="PRO_1000001311" description="LexA repressor">
    <location>
        <begin position="1"/>
        <end position="239"/>
    </location>
</feature>
<feature type="DNA-binding region" description="H-T-H motif" evidence="1">
    <location>
        <begin position="26"/>
        <end position="46"/>
    </location>
</feature>
<feature type="region of interest" description="Disordered" evidence="2">
    <location>
        <begin position="90"/>
        <end position="110"/>
    </location>
</feature>
<feature type="active site" description="For autocatalytic cleavage activity" evidence="1">
    <location>
        <position position="160"/>
    </location>
</feature>
<feature type="active site" description="For autocatalytic cleavage activity" evidence="1">
    <location>
        <position position="198"/>
    </location>
</feature>
<feature type="site" description="Cleavage; by autolysis" evidence="1">
    <location>
        <begin position="125"/>
        <end position="126"/>
    </location>
</feature>